<organism>
    <name type="scientific">Aliarcobacter butzleri (strain RM4018)</name>
    <name type="common">Arcobacter butzleri</name>
    <dbReference type="NCBI Taxonomy" id="367737"/>
    <lineage>
        <taxon>Bacteria</taxon>
        <taxon>Pseudomonadati</taxon>
        <taxon>Campylobacterota</taxon>
        <taxon>Epsilonproteobacteria</taxon>
        <taxon>Campylobacterales</taxon>
        <taxon>Arcobacteraceae</taxon>
        <taxon>Aliarcobacter</taxon>
    </lineage>
</organism>
<name>RL27_ALIB4</name>
<keyword id="KW-1185">Reference proteome</keyword>
<keyword id="KW-0687">Ribonucleoprotein</keyword>
<keyword id="KW-0689">Ribosomal protein</keyword>
<protein>
    <recommendedName>
        <fullName evidence="1">Large ribosomal subunit protein bL27</fullName>
    </recommendedName>
    <alternativeName>
        <fullName evidence="3">50S ribosomal protein L27</fullName>
    </alternativeName>
</protein>
<comment type="similarity">
    <text evidence="1">Belongs to the bacterial ribosomal protein bL27 family.</text>
</comment>
<evidence type="ECO:0000255" key="1">
    <source>
        <dbReference type="HAMAP-Rule" id="MF_00539"/>
    </source>
</evidence>
<evidence type="ECO:0000256" key="2">
    <source>
        <dbReference type="SAM" id="MobiDB-lite"/>
    </source>
</evidence>
<evidence type="ECO:0000305" key="3"/>
<sequence>MAHKKGQGSTQNNRDSAGRRLGVKKYGGEVVRAGNIIIRQRGTRVHLGQNVGMGKDHTIYSLIDGVVKFEQKDKNRKKVSVYAAS</sequence>
<gene>
    <name evidence="1" type="primary">rpmA</name>
    <name type="ordered locus">Abu_1609</name>
</gene>
<feature type="chain" id="PRO_1000061042" description="Large ribosomal subunit protein bL27">
    <location>
        <begin position="1"/>
        <end position="85"/>
    </location>
</feature>
<feature type="region of interest" description="Disordered" evidence="2">
    <location>
        <begin position="1"/>
        <end position="23"/>
    </location>
</feature>
<accession>A8EV84</accession>
<dbReference type="EMBL" id="CP000361">
    <property type="protein sequence ID" value="ABV67857.1"/>
    <property type="molecule type" value="Genomic_DNA"/>
</dbReference>
<dbReference type="RefSeq" id="WP_004509840.1">
    <property type="nucleotide sequence ID" value="NC_009850.1"/>
</dbReference>
<dbReference type="SMR" id="A8EV84"/>
<dbReference type="STRING" id="367737.Abu_1609"/>
<dbReference type="GeneID" id="24304859"/>
<dbReference type="KEGG" id="abu:Abu_1609"/>
<dbReference type="eggNOG" id="COG0211">
    <property type="taxonomic scope" value="Bacteria"/>
</dbReference>
<dbReference type="HOGENOM" id="CLU_095424_4_0_7"/>
<dbReference type="Proteomes" id="UP000001136">
    <property type="component" value="Chromosome"/>
</dbReference>
<dbReference type="GO" id="GO:0022625">
    <property type="term" value="C:cytosolic large ribosomal subunit"/>
    <property type="evidence" value="ECO:0007669"/>
    <property type="project" value="TreeGrafter"/>
</dbReference>
<dbReference type="GO" id="GO:0003735">
    <property type="term" value="F:structural constituent of ribosome"/>
    <property type="evidence" value="ECO:0007669"/>
    <property type="project" value="InterPro"/>
</dbReference>
<dbReference type="GO" id="GO:0006412">
    <property type="term" value="P:translation"/>
    <property type="evidence" value="ECO:0007669"/>
    <property type="project" value="UniProtKB-UniRule"/>
</dbReference>
<dbReference type="FunFam" id="2.40.50.100:FF:000026">
    <property type="entry name" value="50S ribosomal protein L27"/>
    <property type="match status" value="1"/>
</dbReference>
<dbReference type="Gene3D" id="2.40.50.100">
    <property type="match status" value="1"/>
</dbReference>
<dbReference type="HAMAP" id="MF_00539">
    <property type="entry name" value="Ribosomal_bL27"/>
    <property type="match status" value="1"/>
</dbReference>
<dbReference type="InterPro" id="IPR001684">
    <property type="entry name" value="Ribosomal_bL27"/>
</dbReference>
<dbReference type="InterPro" id="IPR018261">
    <property type="entry name" value="Ribosomal_bL27_CS"/>
</dbReference>
<dbReference type="NCBIfam" id="TIGR00062">
    <property type="entry name" value="L27"/>
    <property type="match status" value="1"/>
</dbReference>
<dbReference type="PANTHER" id="PTHR15893:SF0">
    <property type="entry name" value="LARGE RIBOSOMAL SUBUNIT PROTEIN BL27M"/>
    <property type="match status" value="1"/>
</dbReference>
<dbReference type="PANTHER" id="PTHR15893">
    <property type="entry name" value="RIBOSOMAL PROTEIN L27"/>
    <property type="match status" value="1"/>
</dbReference>
<dbReference type="Pfam" id="PF01016">
    <property type="entry name" value="Ribosomal_L27"/>
    <property type="match status" value="1"/>
</dbReference>
<dbReference type="PRINTS" id="PR00063">
    <property type="entry name" value="RIBOSOMALL27"/>
</dbReference>
<dbReference type="SUPFAM" id="SSF110324">
    <property type="entry name" value="Ribosomal L27 protein-like"/>
    <property type="match status" value="1"/>
</dbReference>
<dbReference type="PROSITE" id="PS00831">
    <property type="entry name" value="RIBOSOMAL_L27"/>
    <property type="match status" value="1"/>
</dbReference>
<proteinExistence type="inferred from homology"/>
<reference key="1">
    <citation type="journal article" date="2007" name="PLoS ONE">
        <title>The complete genome sequence and analysis of the Epsilonproteobacterium Arcobacter butzleri.</title>
        <authorList>
            <person name="Miller W.G."/>
            <person name="Parker C.T."/>
            <person name="Rubenfield M."/>
            <person name="Mendz G.L."/>
            <person name="Woesten M.M.S.M."/>
            <person name="Ussery D.W."/>
            <person name="Stolz J.F."/>
            <person name="Binnewies T.T."/>
            <person name="Hallin P.F."/>
            <person name="Wang G."/>
            <person name="Malek J.A."/>
            <person name="Rogosin A."/>
            <person name="Stanker L.H."/>
            <person name="Mandrell R.E."/>
        </authorList>
    </citation>
    <scope>NUCLEOTIDE SEQUENCE [LARGE SCALE GENOMIC DNA]</scope>
    <source>
        <strain>RM4018</strain>
    </source>
</reference>